<gene>
    <name evidence="1" type="primary">hrcA</name>
    <name type="ordered locus">SpyM50345</name>
</gene>
<organism>
    <name type="scientific">Streptococcus pyogenes serotype M5 (strain Manfredo)</name>
    <dbReference type="NCBI Taxonomy" id="160491"/>
    <lineage>
        <taxon>Bacteria</taxon>
        <taxon>Bacillati</taxon>
        <taxon>Bacillota</taxon>
        <taxon>Bacilli</taxon>
        <taxon>Lactobacillales</taxon>
        <taxon>Streptococcaceae</taxon>
        <taxon>Streptococcus</taxon>
    </lineage>
</organism>
<accession>A2RCW4</accession>
<sequence>MITQRQNDILNLIVELFTQTHEPVGSKALQRTIDSSSATIRNDMAKLEKLGLLEKAHTSSGRMPSPAGFKYFVEHSLRLDSIDEQDIYHVIKTFDFEAFKLEDMLQKASHILAEMTGYTSVILDVEPARQRLTGFDVVQLSNHDALAVMTLDESKPVTVQFAIPRNFLTRDLIAFKAIVEERLLDSSVIDIHYKLRTEIPQIVQKYFVTTDNVLQLFDYVFSELFLETVFVAGKVNSLTYSDLSTYQFLDNEQQVAISLRQSLKEGEMASVQVADSQEAALADVSVLTHKFLIPYRGFGLLSLIGPIDMDYRRSVSLVNIIGKVLAAKLGDYYRYLNSNHYEVH</sequence>
<feature type="chain" id="PRO_1000010461" description="Heat-inducible transcription repressor HrcA">
    <location>
        <begin position="1"/>
        <end position="344"/>
    </location>
</feature>
<proteinExistence type="inferred from homology"/>
<name>HRCA_STRPG</name>
<evidence type="ECO:0000255" key="1">
    <source>
        <dbReference type="HAMAP-Rule" id="MF_00081"/>
    </source>
</evidence>
<keyword id="KW-0678">Repressor</keyword>
<keyword id="KW-0346">Stress response</keyword>
<keyword id="KW-0804">Transcription</keyword>
<keyword id="KW-0805">Transcription regulation</keyword>
<dbReference type="EMBL" id="AM295007">
    <property type="protein sequence ID" value="CAM29687.1"/>
    <property type="molecule type" value="Genomic_DNA"/>
</dbReference>
<dbReference type="RefSeq" id="WP_002983310.1">
    <property type="nucleotide sequence ID" value="NC_009332.1"/>
</dbReference>
<dbReference type="SMR" id="A2RCW4"/>
<dbReference type="GeneID" id="69900392"/>
<dbReference type="KEGG" id="spf:SpyM50345"/>
<dbReference type="HOGENOM" id="CLU_050019_1_0_9"/>
<dbReference type="GO" id="GO:0003677">
    <property type="term" value="F:DNA binding"/>
    <property type="evidence" value="ECO:0007669"/>
    <property type="project" value="InterPro"/>
</dbReference>
<dbReference type="GO" id="GO:0045892">
    <property type="term" value="P:negative regulation of DNA-templated transcription"/>
    <property type="evidence" value="ECO:0007669"/>
    <property type="project" value="UniProtKB-UniRule"/>
</dbReference>
<dbReference type="Gene3D" id="3.30.450.40">
    <property type="match status" value="1"/>
</dbReference>
<dbReference type="Gene3D" id="3.30.390.60">
    <property type="entry name" value="Heat-inducible transcription repressor hrca homolog, domain 3"/>
    <property type="match status" value="1"/>
</dbReference>
<dbReference type="Gene3D" id="1.10.10.10">
    <property type="entry name" value="Winged helix-like DNA-binding domain superfamily/Winged helix DNA-binding domain"/>
    <property type="match status" value="1"/>
</dbReference>
<dbReference type="HAMAP" id="MF_00081">
    <property type="entry name" value="HrcA"/>
    <property type="match status" value="1"/>
</dbReference>
<dbReference type="InterPro" id="IPR029016">
    <property type="entry name" value="GAF-like_dom_sf"/>
</dbReference>
<dbReference type="InterPro" id="IPR002571">
    <property type="entry name" value="HrcA"/>
</dbReference>
<dbReference type="InterPro" id="IPR021153">
    <property type="entry name" value="HrcA_C"/>
</dbReference>
<dbReference type="InterPro" id="IPR036388">
    <property type="entry name" value="WH-like_DNA-bd_sf"/>
</dbReference>
<dbReference type="InterPro" id="IPR036390">
    <property type="entry name" value="WH_DNA-bd_sf"/>
</dbReference>
<dbReference type="InterPro" id="IPR005104">
    <property type="entry name" value="WHTH_HrcA_DNA-bd"/>
</dbReference>
<dbReference type="InterPro" id="IPR023120">
    <property type="entry name" value="WHTH_transcript_rep_HrcA_IDD"/>
</dbReference>
<dbReference type="NCBIfam" id="TIGR00331">
    <property type="entry name" value="hrcA"/>
    <property type="match status" value="1"/>
</dbReference>
<dbReference type="PANTHER" id="PTHR34824">
    <property type="entry name" value="HEAT-INDUCIBLE TRANSCRIPTION REPRESSOR HRCA"/>
    <property type="match status" value="1"/>
</dbReference>
<dbReference type="PANTHER" id="PTHR34824:SF1">
    <property type="entry name" value="HEAT-INDUCIBLE TRANSCRIPTION REPRESSOR HRCA"/>
    <property type="match status" value="1"/>
</dbReference>
<dbReference type="Pfam" id="PF01628">
    <property type="entry name" value="HrcA"/>
    <property type="match status" value="1"/>
</dbReference>
<dbReference type="Pfam" id="PF03444">
    <property type="entry name" value="HrcA_DNA-bdg"/>
    <property type="match status" value="1"/>
</dbReference>
<dbReference type="PIRSF" id="PIRSF005485">
    <property type="entry name" value="HrcA"/>
    <property type="match status" value="1"/>
</dbReference>
<dbReference type="SUPFAM" id="SSF55781">
    <property type="entry name" value="GAF domain-like"/>
    <property type="match status" value="1"/>
</dbReference>
<dbReference type="SUPFAM" id="SSF46785">
    <property type="entry name" value="Winged helix' DNA-binding domain"/>
    <property type="match status" value="1"/>
</dbReference>
<protein>
    <recommendedName>
        <fullName evidence="1">Heat-inducible transcription repressor HrcA</fullName>
    </recommendedName>
</protein>
<comment type="function">
    <text evidence="1">Negative regulator of class I heat shock genes (grpE-dnaK-dnaJ and groELS operons). Prevents heat-shock induction of these operons.</text>
</comment>
<comment type="similarity">
    <text evidence="1">Belongs to the HrcA family.</text>
</comment>
<reference key="1">
    <citation type="journal article" date="2007" name="J. Bacteriol.">
        <title>Complete genome of acute rheumatic fever-associated serotype M5 Streptococcus pyogenes strain Manfredo.</title>
        <authorList>
            <person name="Holden M.T.G."/>
            <person name="Scott A."/>
            <person name="Cherevach I."/>
            <person name="Chillingworth T."/>
            <person name="Churcher C."/>
            <person name="Cronin A."/>
            <person name="Dowd L."/>
            <person name="Feltwell T."/>
            <person name="Hamlin N."/>
            <person name="Holroyd S."/>
            <person name="Jagels K."/>
            <person name="Moule S."/>
            <person name="Mungall K."/>
            <person name="Quail M.A."/>
            <person name="Price C."/>
            <person name="Rabbinowitsch E."/>
            <person name="Sharp S."/>
            <person name="Skelton J."/>
            <person name="Whitehead S."/>
            <person name="Barrell B.G."/>
            <person name="Kehoe M."/>
            <person name="Parkhill J."/>
        </authorList>
    </citation>
    <scope>NUCLEOTIDE SEQUENCE [LARGE SCALE GENOMIC DNA]</scope>
    <source>
        <strain>Manfredo</strain>
    </source>
</reference>